<keyword id="KW-0963">Cytoplasm</keyword>
<keyword id="KW-0489">Methyltransferase</keyword>
<keyword id="KW-0545">Nucleotide biosynthesis</keyword>
<keyword id="KW-0808">Transferase</keyword>
<evidence type="ECO:0000255" key="1">
    <source>
        <dbReference type="HAMAP-Rule" id="MF_00008"/>
    </source>
</evidence>
<feature type="chain" id="PRO_1000000666" description="Thymidylate synthase">
    <location>
        <begin position="1"/>
        <end position="264"/>
    </location>
</feature>
<feature type="active site" description="Nucleophile" evidence="1">
    <location>
        <position position="146"/>
    </location>
</feature>
<feature type="binding site" description="in other chain" evidence="1">
    <location>
        <position position="21"/>
    </location>
    <ligand>
        <name>dUMP</name>
        <dbReference type="ChEBI" id="CHEBI:246422"/>
        <note>ligand shared between dimeric partners</note>
    </ligand>
</feature>
<feature type="binding site" evidence="1">
    <location>
        <position position="51"/>
    </location>
    <ligand>
        <name>(6R)-5,10-methylene-5,6,7,8-tetrahydrofolate</name>
        <dbReference type="ChEBI" id="CHEBI:15636"/>
    </ligand>
</feature>
<feature type="binding site" evidence="1">
    <location>
        <begin position="126"/>
        <end position="127"/>
    </location>
    <ligand>
        <name>dUMP</name>
        <dbReference type="ChEBI" id="CHEBI:246422"/>
        <note>ligand shared between dimeric partners</note>
    </ligand>
</feature>
<feature type="binding site" description="in other chain" evidence="1">
    <location>
        <begin position="166"/>
        <end position="169"/>
    </location>
    <ligand>
        <name>dUMP</name>
        <dbReference type="ChEBI" id="CHEBI:246422"/>
        <note>ligand shared between dimeric partners</note>
    </ligand>
</feature>
<feature type="binding site" evidence="1">
    <location>
        <position position="169"/>
    </location>
    <ligand>
        <name>(6R)-5,10-methylene-5,6,7,8-tetrahydrofolate</name>
        <dbReference type="ChEBI" id="CHEBI:15636"/>
    </ligand>
</feature>
<feature type="binding site" description="in other chain" evidence="1">
    <location>
        <position position="177"/>
    </location>
    <ligand>
        <name>dUMP</name>
        <dbReference type="ChEBI" id="CHEBI:246422"/>
        <note>ligand shared between dimeric partners</note>
    </ligand>
</feature>
<feature type="binding site" description="in other chain" evidence="1">
    <location>
        <begin position="207"/>
        <end position="209"/>
    </location>
    <ligand>
        <name>dUMP</name>
        <dbReference type="ChEBI" id="CHEBI:246422"/>
        <note>ligand shared between dimeric partners</note>
    </ligand>
</feature>
<feature type="binding site" evidence="1">
    <location>
        <position position="263"/>
    </location>
    <ligand>
        <name>(6R)-5,10-methylene-5,6,7,8-tetrahydrofolate</name>
        <dbReference type="ChEBI" id="CHEBI:15636"/>
    </ligand>
</feature>
<organism>
    <name type="scientific">Salmonella choleraesuis (strain SC-B67)</name>
    <dbReference type="NCBI Taxonomy" id="321314"/>
    <lineage>
        <taxon>Bacteria</taxon>
        <taxon>Pseudomonadati</taxon>
        <taxon>Pseudomonadota</taxon>
        <taxon>Gammaproteobacteria</taxon>
        <taxon>Enterobacterales</taxon>
        <taxon>Enterobacteriaceae</taxon>
        <taxon>Salmonella</taxon>
    </lineage>
</organism>
<name>TYSY_SALCH</name>
<protein>
    <recommendedName>
        <fullName evidence="1">Thymidylate synthase</fullName>
        <shortName evidence="1">TS</shortName>
        <shortName evidence="1">TSase</shortName>
        <ecNumber evidence="1">2.1.1.45</ecNumber>
    </recommendedName>
</protein>
<dbReference type="EC" id="2.1.1.45" evidence="1"/>
<dbReference type="EMBL" id="AE017220">
    <property type="protein sequence ID" value="AAX66846.1"/>
    <property type="molecule type" value="Genomic_DNA"/>
</dbReference>
<dbReference type="RefSeq" id="WP_000816247.1">
    <property type="nucleotide sequence ID" value="NC_006905.1"/>
</dbReference>
<dbReference type="SMR" id="Q57KB6"/>
<dbReference type="KEGG" id="sec:SCH_2940"/>
<dbReference type="HOGENOM" id="CLU_021669_0_0_6"/>
<dbReference type="UniPathway" id="UPA00575"/>
<dbReference type="Proteomes" id="UP000000538">
    <property type="component" value="Chromosome"/>
</dbReference>
<dbReference type="GO" id="GO:0005829">
    <property type="term" value="C:cytosol"/>
    <property type="evidence" value="ECO:0007669"/>
    <property type="project" value="TreeGrafter"/>
</dbReference>
<dbReference type="GO" id="GO:0004799">
    <property type="term" value="F:thymidylate synthase activity"/>
    <property type="evidence" value="ECO:0007669"/>
    <property type="project" value="UniProtKB-UniRule"/>
</dbReference>
<dbReference type="GO" id="GO:0006231">
    <property type="term" value="P:dTMP biosynthetic process"/>
    <property type="evidence" value="ECO:0007669"/>
    <property type="project" value="UniProtKB-UniRule"/>
</dbReference>
<dbReference type="GO" id="GO:0006235">
    <property type="term" value="P:dTTP biosynthetic process"/>
    <property type="evidence" value="ECO:0007669"/>
    <property type="project" value="UniProtKB-UniRule"/>
</dbReference>
<dbReference type="GO" id="GO:0032259">
    <property type="term" value="P:methylation"/>
    <property type="evidence" value="ECO:0007669"/>
    <property type="project" value="UniProtKB-KW"/>
</dbReference>
<dbReference type="CDD" id="cd00351">
    <property type="entry name" value="TS_Pyrimidine_HMase"/>
    <property type="match status" value="1"/>
</dbReference>
<dbReference type="FunFam" id="3.30.572.10:FF:000001">
    <property type="entry name" value="Thymidylate synthase"/>
    <property type="match status" value="1"/>
</dbReference>
<dbReference type="Gene3D" id="3.30.572.10">
    <property type="entry name" value="Thymidylate synthase/dCMP hydroxymethylase domain"/>
    <property type="match status" value="1"/>
</dbReference>
<dbReference type="HAMAP" id="MF_00008">
    <property type="entry name" value="Thymidy_synth_bact"/>
    <property type="match status" value="1"/>
</dbReference>
<dbReference type="InterPro" id="IPR045097">
    <property type="entry name" value="Thymidate_synth/dCMP_Mease"/>
</dbReference>
<dbReference type="InterPro" id="IPR023451">
    <property type="entry name" value="Thymidate_synth/dCMP_Mease_dom"/>
</dbReference>
<dbReference type="InterPro" id="IPR036926">
    <property type="entry name" value="Thymidate_synth/dCMP_Mease_sf"/>
</dbReference>
<dbReference type="InterPro" id="IPR000398">
    <property type="entry name" value="Thymidylate_synthase"/>
</dbReference>
<dbReference type="InterPro" id="IPR020940">
    <property type="entry name" value="Thymidylate_synthase_AS"/>
</dbReference>
<dbReference type="NCBIfam" id="NF002497">
    <property type="entry name" value="PRK01827.1-3"/>
    <property type="match status" value="1"/>
</dbReference>
<dbReference type="NCBIfam" id="NF002499">
    <property type="entry name" value="PRK01827.1-5"/>
    <property type="match status" value="1"/>
</dbReference>
<dbReference type="NCBIfam" id="TIGR03284">
    <property type="entry name" value="thym_sym"/>
    <property type="match status" value="2"/>
</dbReference>
<dbReference type="PANTHER" id="PTHR11548:SF9">
    <property type="entry name" value="THYMIDYLATE SYNTHASE"/>
    <property type="match status" value="1"/>
</dbReference>
<dbReference type="PANTHER" id="PTHR11548">
    <property type="entry name" value="THYMIDYLATE SYNTHASE 1"/>
    <property type="match status" value="1"/>
</dbReference>
<dbReference type="Pfam" id="PF00303">
    <property type="entry name" value="Thymidylat_synt"/>
    <property type="match status" value="1"/>
</dbReference>
<dbReference type="PRINTS" id="PR00108">
    <property type="entry name" value="THYMDSNTHASE"/>
</dbReference>
<dbReference type="SUPFAM" id="SSF55831">
    <property type="entry name" value="Thymidylate synthase/dCMP hydroxymethylase"/>
    <property type="match status" value="1"/>
</dbReference>
<dbReference type="PROSITE" id="PS00091">
    <property type="entry name" value="THYMIDYLATE_SYNTHASE"/>
    <property type="match status" value="1"/>
</dbReference>
<sequence>MKQYLELMQKVLDEGTQKNDRTGTGTLSIFGHQMRFNLQEGFPLVTTKRCHLRSIIHELLWFLQGDTNIAYLHENNVTIWDEWADENGDLGPVYGKQWRAWPTPDGRHIDQIATVLSQLKNDPDSRRIIVSAWNVGELDKMALAPCHAFFQFYVADGKLSCQLYQRSCDVFLGLPFNIASYALLVHMMAQQCDLDVGDFVWTGGDTHLYSNHMEQTHLQLSREPRALPKLVIKRKPDSLFDYRFDDFEIEGYDPHPGIKAPVAI</sequence>
<proteinExistence type="inferred from homology"/>
<accession>Q57KB6</accession>
<comment type="function">
    <text evidence="1">Catalyzes the reductive methylation of 2'-deoxyuridine-5'-monophosphate (dUMP) to 2'-deoxythymidine-5'-monophosphate (dTMP) while utilizing 5,10-methylenetetrahydrofolate (mTHF) as the methyl donor and reductant in the reaction, yielding dihydrofolate (DHF) as a by-product. This enzymatic reaction provides an intracellular de novo source of dTMP, an essential precursor for DNA biosynthesis.</text>
</comment>
<comment type="catalytic activity">
    <reaction evidence="1">
        <text>dUMP + (6R)-5,10-methylene-5,6,7,8-tetrahydrofolate = 7,8-dihydrofolate + dTMP</text>
        <dbReference type="Rhea" id="RHEA:12104"/>
        <dbReference type="ChEBI" id="CHEBI:15636"/>
        <dbReference type="ChEBI" id="CHEBI:57451"/>
        <dbReference type="ChEBI" id="CHEBI:63528"/>
        <dbReference type="ChEBI" id="CHEBI:246422"/>
        <dbReference type="EC" id="2.1.1.45"/>
    </reaction>
</comment>
<comment type="pathway">
    <text evidence="1">Pyrimidine metabolism; dTTP biosynthesis.</text>
</comment>
<comment type="subunit">
    <text evidence="1">Homodimer.</text>
</comment>
<comment type="subcellular location">
    <subcellularLocation>
        <location evidence="1">Cytoplasm</location>
    </subcellularLocation>
</comment>
<comment type="similarity">
    <text evidence="1">Belongs to the thymidylate synthase family. Bacterial-type ThyA subfamily.</text>
</comment>
<reference key="1">
    <citation type="journal article" date="2005" name="Nucleic Acids Res.">
        <title>The genome sequence of Salmonella enterica serovar Choleraesuis, a highly invasive and resistant zoonotic pathogen.</title>
        <authorList>
            <person name="Chiu C.-H."/>
            <person name="Tang P."/>
            <person name="Chu C."/>
            <person name="Hu S."/>
            <person name="Bao Q."/>
            <person name="Yu J."/>
            <person name="Chou Y.-Y."/>
            <person name="Wang H.-S."/>
            <person name="Lee Y.-S."/>
        </authorList>
    </citation>
    <scope>NUCLEOTIDE SEQUENCE [LARGE SCALE GENOMIC DNA]</scope>
    <source>
        <strain>SC-B67</strain>
    </source>
</reference>
<gene>
    <name evidence="1" type="primary">thyA</name>
    <name type="ordered locus">SCH_2940</name>
</gene>